<accession>P73475</accession>
<comment type="similarity">
    <text evidence="1">Belongs to the universal stress protein A family.</text>
</comment>
<proteinExistence type="inferred from homology"/>
<organism>
    <name type="scientific">Synechocystis sp. (strain ATCC 27184 / PCC 6803 / Kazusa)</name>
    <dbReference type="NCBI Taxonomy" id="1111708"/>
    <lineage>
        <taxon>Bacteria</taxon>
        <taxon>Bacillati</taxon>
        <taxon>Cyanobacteriota</taxon>
        <taxon>Cyanophyceae</taxon>
        <taxon>Synechococcales</taxon>
        <taxon>Merismopediaceae</taxon>
        <taxon>Synechocystis</taxon>
    </lineage>
</organism>
<sequence length="287" mass="31234">MKNILLCTDGSDFAQQSYPYAAWLASKLGGNIKVLYVTDIRAQKAVESVNLSGSIGLGTSEELLKQLVDLEHTKAKLNHQKAKLVLATAKNTLQQAGIESVQVMHKTGFLLDCLEDLKGDFDVIILGKRGETAKFAQGHLGANMERIIRSIPKPCLVTPKQFQTITKVLFAYDGSASCQKILQFLAGSSLLADLPLHIVTVGKTNQDPQAIANLGTAEKVLEKAGFKLEVELLVGHAEEAIVRYQEDNAIDLLLMGAHGHSRIRHLVIGSTTAQVLRKTSIPVLTFR</sequence>
<gene>
    <name type="ordered locus">slr1230</name>
</gene>
<name>Y1230_SYNY3</name>
<protein>
    <recommendedName>
        <fullName>Universal stress protein Slr1230</fullName>
        <shortName>USP Slr1230</shortName>
    </recommendedName>
</protein>
<reference key="1">
    <citation type="journal article" date="1996" name="DNA Res.">
        <title>Sequence analysis of the genome of the unicellular cyanobacterium Synechocystis sp. strain PCC6803. II. Sequence determination of the entire genome and assignment of potential protein-coding regions.</title>
        <authorList>
            <person name="Kaneko T."/>
            <person name="Sato S."/>
            <person name="Kotani H."/>
            <person name="Tanaka A."/>
            <person name="Asamizu E."/>
            <person name="Nakamura Y."/>
            <person name="Miyajima N."/>
            <person name="Hirosawa M."/>
            <person name="Sugiura M."/>
            <person name="Sasamoto S."/>
            <person name="Kimura T."/>
            <person name="Hosouchi T."/>
            <person name="Matsuno A."/>
            <person name="Muraki A."/>
            <person name="Nakazaki N."/>
            <person name="Naruo K."/>
            <person name="Okumura S."/>
            <person name="Shimpo S."/>
            <person name="Takeuchi C."/>
            <person name="Wada T."/>
            <person name="Watanabe A."/>
            <person name="Yamada M."/>
            <person name="Yasuda M."/>
            <person name="Tabata S."/>
        </authorList>
    </citation>
    <scope>NUCLEOTIDE SEQUENCE [LARGE SCALE GENOMIC DNA]</scope>
    <source>
        <strain>ATCC 27184 / PCC 6803 / Kazusa</strain>
    </source>
</reference>
<feature type="chain" id="PRO_0000147440" description="Universal stress protein Slr1230">
    <location>
        <begin position="1"/>
        <end position="287"/>
    </location>
</feature>
<evidence type="ECO:0000305" key="1"/>
<dbReference type="EMBL" id="BA000022">
    <property type="protein sequence ID" value="BAA17515.1"/>
    <property type="molecule type" value="Genomic_DNA"/>
</dbReference>
<dbReference type="PIR" id="S77412">
    <property type="entry name" value="S77412"/>
</dbReference>
<dbReference type="SMR" id="P73475"/>
<dbReference type="IntAct" id="P73475">
    <property type="interactions" value="3"/>
</dbReference>
<dbReference type="STRING" id="1148.gene:10498380"/>
<dbReference type="PaxDb" id="1148-1652594"/>
<dbReference type="EnsemblBacteria" id="BAA17515">
    <property type="protein sequence ID" value="BAA17515"/>
    <property type="gene ID" value="BAA17515"/>
</dbReference>
<dbReference type="KEGG" id="syn:slr1230"/>
<dbReference type="eggNOG" id="COG0589">
    <property type="taxonomic scope" value="Bacteria"/>
</dbReference>
<dbReference type="InParanoid" id="P73475"/>
<dbReference type="PhylomeDB" id="P73475"/>
<dbReference type="Proteomes" id="UP000001425">
    <property type="component" value="Chromosome"/>
</dbReference>
<dbReference type="CDD" id="cd00293">
    <property type="entry name" value="USP-like"/>
    <property type="match status" value="2"/>
</dbReference>
<dbReference type="Gene3D" id="3.40.50.12370">
    <property type="match status" value="1"/>
</dbReference>
<dbReference type="InterPro" id="IPR006015">
    <property type="entry name" value="Universal_stress_UspA"/>
</dbReference>
<dbReference type="InterPro" id="IPR051688">
    <property type="entry name" value="USP_A"/>
</dbReference>
<dbReference type="InterPro" id="IPR006016">
    <property type="entry name" value="UspA"/>
</dbReference>
<dbReference type="PANTHER" id="PTHR43010">
    <property type="entry name" value="UNIVERSAL STRESS PROTEIN SLR1230"/>
    <property type="match status" value="1"/>
</dbReference>
<dbReference type="PANTHER" id="PTHR43010:SF1">
    <property type="entry name" value="USPA DOMAIN-CONTAINING PROTEIN"/>
    <property type="match status" value="1"/>
</dbReference>
<dbReference type="Pfam" id="PF00582">
    <property type="entry name" value="Usp"/>
    <property type="match status" value="2"/>
</dbReference>
<dbReference type="PRINTS" id="PR01438">
    <property type="entry name" value="UNVRSLSTRESS"/>
</dbReference>
<dbReference type="SUPFAM" id="SSF52402">
    <property type="entry name" value="Adenine nucleotide alpha hydrolases-like"/>
    <property type="match status" value="2"/>
</dbReference>
<keyword id="KW-1185">Reference proteome</keyword>